<protein>
    <recommendedName>
        <fullName evidence="1">Fatty acid oxidation complex subunit alpha</fullName>
    </recommendedName>
    <domain>
        <recommendedName>
            <fullName evidence="1">Enoyl-CoA hydratase/Delta(3)-cis-Delta(2)-trans-enoyl-CoA isomerase/3-hydroxybutyryl-CoA epimerase</fullName>
            <ecNumber evidence="1">4.2.1.17</ecNumber>
            <ecNumber evidence="1">5.1.2.3</ecNumber>
            <ecNumber evidence="1">5.3.3.8</ecNumber>
        </recommendedName>
    </domain>
    <domain>
        <recommendedName>
            <fullName evidence="1">3-hydroxyacyl-CoA dehydrogenase</fullName>
            <ecNumber evidence="1">1.1.1.35</ecNumber>
        </recommendedName>
    </domain>
</protein>
<dbReference type="EC" id="4.2.1.17" evidence="1"/>
<dbReference type="EC" id="5.1.2.3" evidence="1"/>
<dbReference type="EC" id="5.3.3.8" evidence="1"/>
<dbReference type="EC" id="1.1.1.35" evidence="1"/>
<dbReference type="EMBL" id="CP000647">
    <property type="protein sequence ID" value="ABR79708.1"/>
    <property type="molecule type" value="Genomic_DNA"/>
</dbReference>
<dbReference type="RefSeq" id="WP_004901902.1">
    <property type="nucleotide sequence ID" value="NC_009648.1"/>
</dbReference>
<dbReference type="SMR" id="A6TGM4"/>
<dbReference type="STRING" id="272620.KPN_04340"/>
<dbReference type="jPOST" id="A6TGM4"/>
<dbReference type="PaxDb" id="272620-KPN_04340"/>
<dbReference type="EnsemblBacteria" id="ABR79708">
    <property type="protein sequence ID" value="ABR79708"/>
    <property type="gene ID" value="KPN_04340"/>
</dbReference>
<dbReference type="KEGG" id="kpn:KPN_04340"/>
<dbReference type="HOGENOM" id="CLU_009834_16_3_6"/>
<dbReference type="UniPathway" id="UPA00659"/>
<dbReference type="Proteomes" id="UP000000265">
    <property type="component" value="Chromosome"/>
</dbReference>
<dbReference type="GO" id="GO:0036125">
    <property type="term" value="C:fatty acid beta-oxidation multienzyme complex"/>
    <property type="evidence" value="ECO:0007669"/>
    <property type="project" value="InterPro"/>
</dbReference>
<dbReference type="GO" id="GO:0008692">
    <property type="term" value="F:3-hydroxybutyryl-CoA epimerase activity"/>
    <property type="evidence" value="ECO:0007669"/>
    <property type="project" value="UniProtKB-UniRule"/>
</dbReference>
<dbReference type="GO" id="GO:0004165">
    <property type="term" value="F:delta(3)-delta(2)-enoyl-CoA isomerase activity"/>
    <property type="evidence" value="ECO:0007669"/>
    <property type="project" value="UniProtKB-UniRule"/>
</dbReference>
<dbReference type="GO" id="GO:0004300">
    <property type="term" value="F:enoyl-CoA hydratase activity"/>
    <property type="evidence" value="ECO:0007669"/>
    <property type="project" value="UniProtKB-UniRule"/>
</dbReference>
<dbReference type="GO" id="GO:0016509">
    <property type="term" value="F:long-chain-3-hydroxyacyl-CoA dehydrogenase activity"/>
    <property type="evidence" value="ECO:0007669"/>
    <property type="project" value="TreeGrafter"/>
</dbReference>
<dbReference type="GO" id="GO:0070403">
    <property type="term" value="F:NAD+ binding"/>
    <property type="evidence" value="ECO:0007669"/>
    <property type="project" value="InterPro"/>
</dbReference>
<dbReference type="GO" id="GO:0006635">
    <property type="term" value="P:fatty acid beta-oxidation"/>
    <property type="evidence" value="ECO:0007669"/>
    <property type="project" value="UniProtKB-UniRule"/>
</dbReference>
<dbReference type="CDD" id="cd06558">
    <property type="entry name" value="crotonase-like"/>
    <property type="match status" value="1"/>
</dbReference>
<dbReference type="FunFam" id="1.10.1040.50:FF:000001">
    <property type="entry name" value="Fatty acid oxidation complex subunit alpha"/>
    <property type="match status" value="1"/>
</dbReference>
<dbReference type="FunFam" id="3.90.226.10:FF:000018">
    <property type="entry name" value="Fatty acid oxidation complex subunit alpha"/>
    <property type="match status" value="1"/>
</dbReference>
<dbReference type="FunFam" id="3.40.50.720:FF:000009">
    <property type="entry name" value="Fatty oxidation complex, alpha subunit"/>
    <property type="match status" value="1"/>
</dbReference>
<dbReference type="Gene3D" id="1.10.1040.50">
    <property type="match status" value="1"/>
</dbReference>
<dbReference type="Gene3D" id="3.90.226.10">
    <property type="entry name" value="2-enoyl-CoA Hydratase, Chain A, domain 1"/>
    <property type="match status" value="1"/>
</dbReference>
<dbReference type="Gene3D" id="3.40.50.720">
    <property type="entry name" value="NAD(P)-binding Rossmann-like Domain"/>
    <property type="match status" value="1"/>
</dbReference>
<dbReference type="HAMAP" id="MF_01621">
    <property type="entry name" value="FadB"/>
    <property type="match status" value="1"/>
</dbReference>
<dbReference type="InterPro" id="IPR006180">
    <property type="entry name" value="3-OHacyl-CoA_DH_CS"/>
</dbReference>
<dbReference type="InterPro" id="IPR006176">
    <property type="entry name" value="3-OHacyl-CoA_DH_NAD-bd"/>
</dbReference>
<dbReference type="InterPro" id="IPR006108">
    <property type="entry name" value="3HC_DH_C"/>
</dbReference>
<dbReference type="InterPro" id="IPR008927">
    <property type="entry name" value="6-PGluconate_DH-like_C_sf"/>
</dbReference>
<dbReference type="InterPro" id="IPR029045">
    <property type="entry name" value="ClpP/crotonase-like_dom_sf"/>
</dbReference>
<dbReference type="InterPro" id="IPR018376">
    <property type="entry name" value="Enoyl-CoA_hyd/isom_CS"/>
</dbReference>
<dbReference type="InterPro" id="IPR001753">
    <property type="entry name" value="Enoyl-CoA_hydra/iso"/>
</dbReference>
<dbReference type="InterPro" id="IPR050136">
    <property type="entry name" value="FA_oxidation_alpha_subunit"/>
</dbReference>
<dbReference type="InterPro" id="IPR012799">
    <property type="entry name" value="FadB"/>
</dbReference>
<dbReference type="InterPro" id="IPR036291">
    <property type="entry name" value="NAD(P)-bd_dom_sf"/>
</dbReference>
<dbReference type="NCBIfam" id="TIGR02437">
    <property type="entry name" value="FadB"/>
    <property type="match status" value="1"/>
</dbReference>
<dbReference type="NCBIfam" id="NF008727">
    <property type="entry name" value="PRK11730.1"/>
    <property type="match status" value="1"/>
</dbReference>
<dbReference type="PANTHER" id="PTHR43612">
    <property type="entry name" value="TRIFUNCTIONAL ENZYME SUBUNIT ALPHA"/>
    <property type="match status" value="1"/>
</dbReference>
<dbReference type="PANTHER" id="PTHR43612:SF3">
    <property type="entry name" value="TRIFUNCTIONAL ENZYME SUBUNIT ALPHA, MITOCHONDRIAL"/>
    <property type="match status" value="1"/>
</dbReference>
<dbReference type="Pfam" id="PF00725">
    <property type="entry name" value="3HCDH"/>
    <property type="match status" value="2"/>
</dbReference>
<dbReference type="Pfam" id="PF02737">
    <property type="entry name" value="3HCDH_N"/>
    <property type="match status" value="1"/>
</dbReference>
<dbReference type="Pfam" id="PF00378">
    <property type="entry name" value="ECH_1"/>
    <property type="match status" value="1"/>
</dbReference>
<dbReference type="SUPFAM" id="SSF48179">
    <property type="entry name" value="6-phosphogluconate dehydrogenase C-terminal domain-like"/>
    <property type="match status" value="2"/>
</dbReference>
<dbReference type="SUPFAM" id="SSF52096">
    <property type="entry name" value="ClpP/crotonase"/>
    <property type="match status" value="1"/>
</dbReference>
<dbReference type="SUPFAM" id="SSF51735">
    <property type="entry name" value="NAD(P)-binding Rossmann-fold domains"/>
    <property type="match status" value="1"/>
</dbReference>
<dbReference type="PROSITE" id="PS00067">
    <property type="entry name" value="3HCDH"/>
    <property type="match status" value="1"/>
</dbReference>
<dbReference type="PROSITE" id="PS00166">
    <property type="entry name" value="ENOYL_COA_HYDRATASE"/>
    <property type="match status" value="1"/>
</dbReference>
<comment type="function">
    <text evidence="1">Involved in the aerobic and anaerobic degradation of long-chain fatty acids via beta-oxidation cycle. Catalyzes the formation of 3-oxoacyl-CoA from enoyl-CoA via L-3-hydroxyacyl-CoA. It can also use D-3-hydroxyacyl-CoA and cis-3-enoyl-CoA as substrate.</text>
</comment>
<comment type="catalytic activity">
    <reaction evidence="1">
        <text>a (3S)-3-hydroxyacyl-CoA + NAD(+) = a 3-oxoacyl-CoA + NADH + H(+)</text>
        <dbReference type="Rhea" id="RHEA:22432"/>
        <dbReference type="ChEBI" id="CHEBI:15378"/>
        <dbReference type="ChEBI" id="CHEBI:57318"/>
        <dbReference type="ChEBI" id="CHEBI:57540"/>
        <dbReference type="ChEBI" id="CHEBI:57945"/>
        <dbReference type="ChEBI" id="CHEBI:90726"/>
        <dbReference type="EC" id="1.1.1.35"/>
    </reaction>
</comment>
<comment type="catalytic activity">
    <reaction evidence="1">
        <text>a (3S)-3-hydroxyacyl-CoA = a (2E)-enoyl-CoA + H2O</text>
        <dbReference type="Rhea" id="RHEA:16105"/>
        <dbReference type="ChEBI" id="CHEBI:15377"/>
        <dbReference type="ChEBI" id="CHEBI:57318"/>
        <dbReference type="ChEBI" id="CHEBI:58856"/>
        <dbReference type="EC" id="4.2.1.17"/>
    </reaction>
</comment>
<comment type="catalytic activity">
    <reaction evidence="1">
        <text>a 4-saturated-(3S)-3-hydroxyacyl-CoA = a (3E)-enoyl-CoA + H2O</text>
        <dbReference type="Rhea" id="RHEA:20724"/>
        <dbReference type="ChEBI" id="CHEBI:15377"/>
        <dbReference type="ChEBI" id="CHEBI:58521"/>
        <dbReference type="ChEBI" id="CHEBI:137480"/>
        <dbReference type="EC" id="4.2.1.17"/>
    </reaction>
</comment>
<comment type="catalytic activity">
    <reaction evidence="1">
        <text>(3S)-3-hydroxybutanoyl-CoA = (3R)-3-hydroxybutanoyl-CoA</text>
        <dbReference type="Rhea" id="RHEA:21760"/>
        <dbReference type="ChEBI" id="CHEBI:57315"/>
        <dbReference type="ChEBI" id="CHEBI:57316"/>
        <dbReference type="EC" id="5.1.2.3"/>
    </reaction>
</comment>
<comment type="catalytic activity">
    <reaction evidence="1">
        <text>a (3Z)-enoyl-CoA = a 4-saturated (2E)-enoyl-CoA</text>
        <dbReference type="Rhea" id="RHEA:45900"/>
        <dbReference type="ChEBI" id="CHEBI:85097"/>
        <dbReference type="ChEBI" id="CHEBI:85489"/>
        <dbReference type="EC" id="5.3.3.8"/>
    </reaction>
</comment>
<comment type="catalytic activity">
    <reaction evidence="1">
        <text>a (3E)-enoyl-CoA = a 4-saturated (2E)-enoyl-CoA</text>
        <dbReference type="Rhea" id="RHEA:45228"/>
        <dbReference type="ChEBI" id="CHEBI:58521"/>
        <dbReference type="ChEBI" id="CHEBI:85097"/>
        <dbReference type="EC" id="5.3.3.8"/>
    </reaction>
</comment>
<comment type="pathway">
    <text evidence="1">Lipid metabolism; fatty acid beta-oxidation.</text>
</comment>
<comment type="subunit">
    <text evidence="1">Heterotetramer of two alpha chains (FadB) and two beta chains (FadA).</text>
</comment>
<comment type="similarity">
    <text evidence="1">In the N-terminal section; belongs to the enoyl-CoA hydratase/isomerase family.</text>
</comment>
<comment type="similarity">
    <text evidence="1">In the C-terminal section; belongs to the 3-hydroxyacyl-CoA dehydrogenase family.</text>
</comment>
<sequence>MLYKGDTLYLDWLEDGIAELVFDAPGSVNKLDTATVASLGHALDVLEKQSDLKGLLLRSEKAAFIVGADITEFLSLFLVPEEQLSQWLHFANSVFNRLEDLPVPTISAVNGYALGGGCECVLATDYRLATPDLRIGLPETKLGIMPGFGGSVRLPRLLGADSALEIIAAGKDVGADQALKIGLVDGVVAAEKLRDGALAILRQAMNGDLDWKAKRQPKLEPLKLSKIEAAMSFTIAKGMVAQTAGKHYPAPITAVKTIEAAARLGREEALVLENKSFVPLAHTNEARALVGIFLNDQYVKAKAKKLTKDVETPKHAAVLGAGIMGGGIAYQSAWKGVPVVMKDISDKSLTLGMTEAAKLLNKQLERGKIDGLKLAGVISTIQPTLEYSGFDRVDVVVEAVVENPKVKKAVLAETESKVRPDTVLASNTSTIPISELASVLQRPENFCGMHFFNPVHRMPLVEVIRGEKTSDNTIAKVVAWASKMGKTPIVVNDCPGFFVNRVLFPYFAGFSQLLRDGADFRKVDKVMEKQFGWPMGPAYLLDVVGIDTAHHAQAVMAAGFPQRMQKDYRDAIDALFDANRFGQKNGLGFWRYKDDSKGKPKKEEDAAVDSLLADVSQPKRDFSDEEIIARMMIPMVNEVVRCLEEGIIASPAEADMALVYGLGFPPFHGGAFRWLDTIGSAKYLDMAQQYQHLGPLYEVPAGLRDKARHNEAYYPQVEPARPVGALKTA</sequence>
<proteinExistence type="inferred from homology"/>
<gene>
    <name evidence="1" type="primary">fadB</name>
    <name type="ordered locus">KPN78578_42840</name>
    <name type="ORF">KPN_04340</name>
</gene>
<evidence type="ECO:0000255" key="1">
    <source>
        <dbReference type="HAMAP-Rule" id="MF_01621"/>
    </source>
</evidence>
<organism>
    <name type="scientific">Klebsiella pneumoniae subsp. pneumoniae (strain ATCC 700721 / MGH 78578)</name>
    <dbReference type="NCBI Taxonomy" id="272620"/>
    <lineage>
        <taxon>Bacteria</taxon>
        <taxon>Pseudomonadati</taxon>
        <taxon>Pseudomonadota</taxon>
        <taxon>Gammaproteobacteria</taxon>
        <taxon>Enterobacterales</taxon>
        <taxon>Enterobacteriaceae</taxon>
        <taxon>Klebsiella/Raoultella group</taxon>
        <taxon>Klebsiella</taxon>
        <taxon>Klebsiella pneumoniae complex</taxon>
    </lineage>
</organism>
<name>FADB_KLEP7</name>
<reference key="1">
    <citation type="submission" date="2006-09" db="EMBL/GenBank/DDBJ databases">
        <authorList>
            <consortium name="The Klebsiella pneumonia Genome Sequencing Project"/>
            <person name="McClelland M."/>
            <person name="Sanderson E.K."/>
            <person name="Spieth J."/>
            <person name="Clifton W.S."/>
            <person name="Latreille P."/>
            <person name="Sabo A."/>
            <person name="Pepin K."/>
            <person name="Bhonagiri V."/>
            <person name="Porwollik S."/>
            <person name="Ali J."/>
            <person name="Wilson R.K."/>
        </authorList>
    </citation>
    <scope>NUCLEOTIDE SEQUENCE [LARGE SCALE GENOMIC DNA]</scope>
    <source>
        <strain>ATCC 700721 / MGH 78578</strain>
    </source>
</reference>
<keyword id="KW-0276">Fatty acid metabolism</keyword>
<keyword id="KW-0413">Isomerase</keyword>
<keyword id="KW-0442">Lipid degradation</keyword>
<keyword id="KW-0443">Lipid metabolism</keyword>
<keyword id="KW-0456">Lyase</keyword>
<keyword id="KW-0511">Multifunctional enzyme</keyword>
<keyword id="KW-0520">NAD</keyword>
<keyword id="KW-0560">Oxidoreductase</keyword>
<feature type="chain" id="PRO_1000069564" description="Fatty acid oxidation complex subunit alpha">
    <location>
        <begin position="1"/>
        <end position="729"/>
    </location>
</feature>
<feature type="region of interest" description="Enoyl-CoA hydratase/isomerase" evidence="1">
    <location>
        <begin position="1"/>
        <end position="189"/>
    </location>
</feature>
<feature type="region of interest" description="3-hydroxyacyl-CoA dehydrogenase" evidence="1">
    <location>
        <begin position="311"/>
        <end position="729"/>
    </location>
</feature>
<feature type="active site" description="For 3-hydroxyacyl-CoA dehydrogenase activity" evidence="1">
    <location>
        <position position="450"/>
    </location>
</feature>
<feature type="binding site" evidence="1">
    <location>
        <position position="296"/>
    </location>
    <ligand>
        <name>substrate</name>
    </ligand>
</feature>
<feature type="binding site" evidence="1">
    <location>
        <position position="324"/>
    </location>
    <ligand>
        <name>NAD(+)</name>
        <dbReference type="ChEBI" id="CHEBI:57540"/>
    </ligand>
</feature>
<feature type="binding site" evidence="1">
    <location>
        <position position="343"/>
    </location>
    <ligand>
        <name>NAD(+)</name>
        <dbReference type="ChEBI" id="CHEBI:57540"/>
    </ligand>
</feature>
<feature type="binding site" evidence="1">
    <location>
        <begin position="400"/>
        <end position="402"/>
    </location>
    <ligand>
        <name>NAD(+)</name>
        <dbReference type="ChEBI" id="CHEBI:57540"/>
    </ligand>
</feature>
<feature type="binding site" evidence="1">
    <location>
        <position position="407"/>
    </location>
    <ligand>
        <name>NAD(+)</name>
        <dbReference type="ChEBI" id="CHEBI:57540"/>
    </ligand>
</feature>
<feature type="binding site" evidence="1">
    <location>
        <position position="429"/>
    </location>
    <ligand>
        <name>NAD(+)</name>
        <dbReference type="ChEBI" id="CHEBI:57540"/>
    </ligand>
</feature>
<feature type="binding site" evidence="1">
    <location>
        <position position="453"/>
    </location>
    <ligand>
        <name>NAD(+)</name>
        <dbReference type="ChEBI" id="CHEBI:57540"/>
    </ligand>
</feature>
<feature type="binding site" evidence="1">
    <location>
        <position position="500"/>
    </location>
    <ligand>
        <name>substrate</name>
    </ligand>
</feature>
<feature type="binding site" evidence="1">
    <location>
        <position position="660"/>
    </location>
    <ligand>
        <name>substrate</name>
    </ligand>
</feature>
<feature type="site" description="Important for catalytic activity" evidence="1">
    <location>
        <position position="119"/>
    </location>
</feature>
<feature type="site" description="Important for catalytic activity" evidence="1">
    <location>
        <position position="139"/>
    </location>
</feature>
<accession>A6TGM4</accession>